<gene>
    <name evidence="1" type="primary">nuoC</name>
    <name evidence="1" type="synonym">nuoCD</name>
    <name evidence="1" type="synonym">nuoD</name>
    <name type="ordered locus">Pfl01_3605</name>
</gene>
<protein>
    <recommendedName>
        <fullName evidence="1">NADH-quinone oxidoreductase subunit C/D</fullName>
        <ecNumber evidence="1">7.1.1.-</ecNumber>
    </recommendedName>
    <alternativeName>
        <fullName evidence="1">NADH dehydrogenase I subunit C/D</fullName>
    </alternativeName>
    <alternativeName>
        <fullName evidence="1">NDH-1 subunit C/D</fullName>
    </alternativeName>
</protein>
<accession>Q3KA61</accession>
<sequence length="594" mass="67726">MTTGSALYIPPYKADDQDVVVELNNRFGAEAFTAQPTRTGMPVLWVARAKLVEVLTFLRNLPKPYVMLYDLHGVDERLRTKRQGLPSGADFTVFYHLMSLERNSDVMIKVALSESDLSLPTVTSIWPNANWYEREVWDMYGIDFKGHPHLSRIMMPPTWEGHPLRKDFPARATEFDPFSLNLAKQQLEEEAARFRPEDWGMKRSGANEDYMFLNLGPNHPSAHGAFRIILQLDGEEIVDCVPDIGYHHRGAEKMAERQSWHSFIPYTDRIDYLGGVMNNLPYVLSVEKLAGIKVPEKVDVIRIMMAEFFRITSHLLFLGTYIQDVGAMTPVFFTFTDRQKAYTVIEAITGFRLHPAWYRIGGVAHDLPRGWEKLVKDFVEWLPKRLDEYTKAALQNSILKGRTIGVAQYNTKEALEWGVTGAGLRSTGCDFDLRKARPYSGYENFEFEVPLAANGDAYDRCMVRVEEMRQSVKIIDQCLRNMPEGPYKADHPLTTPPPKERTLQHIETLITHFLQVSWGPVMPANESFQMIEATKGINSYYLTSDGGTMSYRTRIRTPSFAHLQQIPSVIKGSMVADLIAYLGSIDFVMADVDR</sequence>
<reference key="1">
    <citation type="journal article" date="2009" name="Genome Biol.">
        <title>Genomic and genetic analyses of diversity and plant interactions of Pseudomonas fluorescens.</title>
        <authorList>
            <person name="Silby M.W."/>
            <person name="Cerdeno-Tarraga A.M."/>
            <person name="Vernikos G.S."/>
            <person name="Giddens S.R."/>
            <person name="Jackson R.W."/>
            <person name="Preston G.M."/>
            <person name="Zhang X.-X."/>
            <person name="Moon C.D."/>
            <person name="Gehrig S.M."/>
            <person name="Godfrey S.A.C."/>
            <person name="Knight C.G."/>
            <person name="Malone J.G."/>
            <person name="Robinson Z."/>
            <person name="Spiers A.J."/>
            <person name="Harris S."/>
            <person name="Challis G.L."/>
            <person name="Yaxley A.M."/>
            <person name="Harris D."/>
            <person name="Seeger K."/>
            <person name="Murphy L."/>
            <person name="Rutter S."/>
            <person name="Squares R."/>
            <person name="Quail M.A."/>
            <person name="Saunders E."/>
            <person name="Mavromatis K."/>
            <person name="Brettin T.S."/>
            <person name="Bentley S.D."/>
            <person name="Hothersall J."/>
            <person name="Stephens E."/>
            <person name="Thomas C.M."/>
            <person name="Parkhill J."/>
            <person name="Levy S.B."/>
            <person name="Rainey P.B."/>
            <person name="Thomson N.R."/>
        </authorList>
    </citation>
    <scope>NUCLEOTIDE SEQUENCE [LARGE SCALE GENOMIC DNA]</scope>
    <source>
        <strain>Pf0-1</strain>
    </source>
</reference>
<dbReference type="EC" id="7.1.1.-" evidence="1"/>
<dbReference type="EMBL" id="CP000094">
    <property type="protein sequence ID" value="ABA75343.1"/>
    <property type="molecule type" value="Genomic_DNA"/>
</dbReference>
<dbReference type="RefSeq" id="WP_011334957.1">
    <property type="nucleotide sequence ID" value="NC_007492.2"/>
</dbReference>
<dbReference type="SMR" id="Q3KA61"/>
<dbReference type="KEGG" id="pfo:Pfl01_3605"/>
<dbReference type="eggNOG" id="COG0649">
    <property type="taxonomic scope" value="Bacteria"/>
</dbReference>
<dbReference type="eggNOG" id="COG0852">
    <property type="taxonomic scope" value="Bacteria"/>
</dbReference>
<dbReference type="HOGENOM" id="CLU_015134_3_2_6"/>
<dbReference type="Proteomes" id="UP000002704">
    <property type="component" value="Chromosome"/>
</dbReference>
<dbReference type="GO" id="GO:0030964">
    <property type="term" value="C:NADH dehydrogenase complex"/>
    <property type="evidence" value="ECO:0007669"/>
    <property type="project" value="InterPro"/>
</dbReference>
<dbReference type="GO" id="GO:0005886">
    <property type="term" value="C:plasma membrane"/>
    <property type="evidence" value="ECO:0007669"/>
    <property type="project" value="UniProtKB-SubCell"/>
</dbReference>
<dbReference type="GO" id="GO:0051287">
    <property type="term" value="F:NAD binding"/>
    <property type="evidence" value="ECO:0007669"/>
    <property type="project" value="InterPro"/>
</dbReference>
<dbReference type="GO" id="GO:0008137">
    <property type="term" value="F:NADH dehydrogenase (ubiquinone) activity"/>
    <property type="evidence" value="ECO:0007669"/>
    <property type="project" value="InterPro"/>
</dbReference>
<dbReference type="GO" id="GO:0050136">
    <property type="term" value="F:NADH:ubiquinone reductase (non-electrogenic) activity"/>
    <property type="evidence" value="ECO:0007669"/>
    <property type="project" value="UniProtKB-UniRule"/>
</dbReference>
<dbReference type="GO" id="GO:0048038">
    <property type="term" value="F:quinone binding"/>
    <property type="evidence" value="ECO:0007669"/>
    <property type="project" value="UniProtKB-KW"/>
</dbReference>
<dbReference type="FunFam" id="1.10.645.10:FF:000001">
    <property type="entry name" value="NADH-quinone oxidoreductase subunit C/D"/>
    <property type="match status" value="1"/>
</dbReference>
<dbReference type="FunFam" id="3.30.460.80:FF:000001">
    <property type="entry name" value="NADH-quinone oxidoreductase subunit C/D"/>
    <property type="match status" value="1"/>
</dbReference>
<dbReference type="Gene3D" id="1.10.645.10">
    <property type="entry name" value="Cytochrome-c3 Hydrogenase, chain B"/>
    <property type="match status" value="1"/>
</dbReference>
<dbReference type="Gene3D" id="3.30.460.80">
    <property type="entry name" value="NADH:ubiquinone oxidoreductase, 30kDa subunit"/>
    <property type="match status" value="1"/>
</dbReference>
<dbReference type="HAMAP" id="MF_01357">
    <property type="entry name" value="NDH1_NuoC"/>
    <property type="match status" value="1"/>
</dbReference>
<dbReference type="HAMAP" id="MF_01359">
    <property type="entry name" value="NDH1_NuoCD_1"/>
    <property type="match status" value="1"/>
</dbReference>
<dbReference type="HAMAP" id="MF_01358">
    <property type="entry name" value="NDH1_NuoD"/>
    <property type="match status" value="1"/>
</dbReference>
<dbReference type="InterPro" id="IPR010218">
    <property type="entry name" value="NADH_DH_suC"/>
</dbReference>
<dbReference type="InterPro" id="IPR023062">
    <property type="entry name" value="NADH_DH_suCD"/>
</dbReference>
<dbReference type="InterPro" id="IPR001135">
    <property type="entry name" value="NADH_Q_OxRdtase_suD"/>
</dbReference>
<dbReference type="InterPro" id="IPR037232">
    <property type="entry name" value="NADH_quin_OxRdtase_su_C/D-like"/>
</dbReference>
<dbReference type="InterPro" id="IPR001268">
    <property type="entry name" value="NADH_UbQ_OxRdtase_30kDa_su"/>
</dbReference>
<dbReference type="InterPro" id="IPR014029">
    <property type="entry name" value="NADH_UbQ_OxRdtase_49kDa_CS"/>
</dbReference>
<dbReference type="InterPro" id="IPR022885">
    <property type="entry name" value="NDH1_su_D/H"/>
</dbReference>
<dbReference type="InterPro" id="IPR029014">
    <property type="entry name" value="NiFe-Hase_large"/>
</dbReference>
<dbReference type="NCBIfam" id="TIGR01961">
    <property type="entry name" value="NuoC_fam"/>
    <property type="match status" value="1"/>
</dbReference>
<dbReference type="NCBIfam" id="TIGR01962">
    <property type="entry name" value="NuoD"/>
    <property type="match status" value="1"/>
</dbReference>
<dbReference type="NCBIfam" id="NF004739">
    <property type="entry name" value="PRK06075.1"/>
    <property type="match status" value="1"/>
</dbReference>
<dbReference type="NCBIfam" id="NF008728">
    <property type="entry name" value="PRK11742.1"/>
    <property type="match status" value="1"/>
</dbReference>
<dbReference type="PANTHER" id="PTHR11993:SF45">
    <property type="entry name" value="NADH-QUINONE OXIDOREDUCTASE SUBUNIT C_D"/>
    <property type="match status" value="1"/>
</dbReference>
<dbReference type="PANTHER" id="PTHR11993">
    <property type="entry name" value="NADH-UBIQUINONE OXIDOREDUCTASE 49 KDA SUBUNIT"/>
    <property type="match status" value="1"/>
</dbReference>
<dbReference type="Pfam" id="PF00329">
    <property type="entry name" value="Complex1_30kDa"/>
    <property type="match status" value="1"/>
</dbReference>
<dbReference type="Pfam" id="PF00346">
    <property type="entry name" value="Complex1_49kDa"/>
    <property type="match status" value="1"/>
</dbReference>
<dbReference type="SUPFAM" id="SSF56762">
    <property type="entry name" value="HydB/Nqo4-like"/>
    <property type="match status" value="1"/>
</dbReference>
<dbReference type="SUPFAM" id="SSF143243">
    <property type="entry name" value="Nqo5-like"/>
    <property type="match status" value="1"/>
</dbReference>
<dbReference type="PROSITE" id="PS00535">
    <property type="entry name" value="COMPLEX1_49K"/>
    <property type="match status" value="1"/>
</dbReference>
<organism>
    <name type="scientific">Pseudomonas fluorescens (strain Pf0-1)</name>
    <dbReference type="NCBI Taxonomy" id="205922"/>
    <lineage>
        <taxon>Bacteria</taxon>
        <taxon>Pseudomonadati</taxon>
        <taxon>Pseudomonadota</taxon>
        <taxon>Gammaproteobacteria</taxon>
        <taxon>Pseudomonadales</taxon>
        <taxon>Pseudomonadaceae</taxon>
        <taxon>Pseudomonas</taxon>
    </lineage>
</organism>
<evidence type="ECO:0000255" key="1">
    <source>
        <dbReference type="HAMAP-Rule" id="MF_01359"/>
    </source>
</evidence>
<name>NUOCD_PSEPF</name>
<proteinExistence type="inferred from homology"/>
<feature type="chain" id="PRO_0000358659" description="NADH-quinone oxidoreductase subunit C/D">
    <location>
        <begin position="1"/>
        <end position="594"/>
    </location>
</feature>
<feature type="region of interest" description="NADH dehydrogenase I subunit C" evidence="1">
    <location>
        <begin position="1"/>
        <end position="185"/>
    </location>
</feature>
<feature type="region of interest" description="NADH dehydrogenase I subunit D" evidence="1">
    <location>
        <begin position="209"/>
        <end position="594"/>
    </location>
</feature>
<keyword id="KW-0997">Cell inner membrane</keyword>
<keyword id="KW-1003">Cell membrane</keyword>
<keyword id="KW-0472">Membrane</keyword>
<keyword id="KW-0511">Multifunctional enzyme</keyword>
<keyword id="KW-0520">NAD</keyword>
<keyword id="KW-0874">Quinone</keyword>
<keyword id="KW-1278">Translocase</keyword>
<keyword id="KW-0813">Transport</keyword>
<keyword id="KW-0830">Ubiquinone</keyword>
<comment type="function">
    <text evidence="1">NDH-1 shuttles electrons from NADH, via FMN and iron-sulfur (Fe-S) centers, to quinones in the respiratory chain. The immediate electron acceptor for the enzyme in this species is believed to be ubiquinone. Couples the redox reaction to proton translocation (for every two electrons transferred, four hydrogen ions are translocated across the cytoplasmic membrane), and thus conserves the redox energy in a proton gradient.</text>
</comment>
<comment type="catalytic activity">
    <reaction evidence="1">
        <text>a quinone + NADH + 5 H(+)(in) = a quinol + NAD(+) + 4 H(+)(out)</text>
        <dbReference type="Rhea" id="RHEA:57888"/>
        <dbReference type="ChEBI" id="CHEBI:15378"/>
        <dbReference type="ChEBI" id="CHEBI:24646"/>
        <dbReference type="ChEBI" id="CHEBI:57540"/>
        <dbReference type="ChEBI" id="CHEBI:57945"/>
        <dbReference type="ChEBI" id="CHEBI:132124"/>
    </reaction>
</comment>
<comment type="subunit">
    <text evidence="1">NDH-1 is composed of 13 different subunits. Subunits NuoB, CD, E, F, and G constitute the peripheral sector of the complex.</text>
</comment>
<comment type="subcellular location">
    <subcellularLocation>
        <location evidence="1">Cell inner membrane</location>
        <topology evidence="1">Peripheral membrane protein</topology>
        <orientation evidence="1">Cytoplasmic side</orientation>
    </subcellularLocation>
</comment>
<comment type="similarity">
    <text evidence="1">In the N-terminal section; belongs to the complex I 30 kDa subunit family.</text>
</comment>
<comment type="similarity">
    <text evidence="1">In the C-terminal section; belongs to the complex I 49 kDa subunit family.</text>
</comment>